<gene>
    <name evidence="1" type="primary">murA1</name>
    <name type="ordered locus">BA_5529</name>
    <name type="ordered locus">GBAA_5529</name>
    <name type="ordered locus">BAS5137</name>
</gene>
<organism>
    <name type="scientific">Bacillus anthracis</name>
    <dbReference type="NCBI Taxonomy" id="1392"/>
    <lineage>
        <taxon>Bacteria</taxon>
        <taxon>Bacillati</taxon>
        <taxon>Bacillota</taxon>
        <taxon>Bacilli</taxon>
        <taxon>Bacillales</taxon>
        <taxon>Bacillaceae</taxon>
        <taxon>Bacillus</taxon>
        <taxon>Bacillus cereus group</taxon>
    </lineage>
</organism>
<accession>Q81K13</accession>
<accession>Q6HQL2</accession>
<accession>Q6KJY6</accession>
<dbReference type="EC" id="2.5.1.7" evidence="1"/>
<dbReference type="EMBL" id="AE016879">
    <property type="protein sequence ID" value="AAP29173.1"/>
    <property type="molecule type" value="Genomic_DNA"/>
</dbReference>
<dbReference type="EMBL" id="AE017334">
    <property type="protein sequence ID" value="AAT34672.1"/>
    <property type="molecule type" value="Genomic_DNA"/>
</dbReference>
<dbReference type="EMBL" id="AE017225">
    <property type="protein sequence ID" value="AAT57426.1"/>
    <property type="molecule type" value="Genomic_DNA"/>
</dbReference>
<dbReference type="RefSeq" id="NP_847687.1">
    <property type="nucleotide sequence ID" value="NC_003997.3"/>
</dbReference>
<dbReference type="RefSeq" id="YP_031376.1">
    <property type="nucleotide sequence ID" value="NC_005945.1"/>
</dbReference>
<dbReference type="PDB" id="3SG1">
    <property type="method" value="X-ray"/>
    <property type="resolution" value="2.60 A"/>
    <property type="chains" value="A/B/C/D=1-434"/>
</dbReference>
<dbReference type="PDBsum" id="3SG1"/>
<dbReference type="SMR" id="Q81K13"/>
<dbReference type="STRING" id="261594.GBAA_5529"/>
<dbReference type="DNASU" id="1085196"/>
<dbReference type="KEGG" id="ban:BA_5529"/>
<dbReference type="KEGG" id="bar:GBAA_5529"/>
<dbReference type="KEGG" id="bat:BAS5137"/>
<dbReference type="PATRIC" id="fig|198094.11.peg.5489"/>
<dbReference type="eggNOG" id="COG0766">
    <property type="taxonomic scope" value="Bacteria"/>
</dbReference>
<dbReference type="HOGENOM" id="CLU_027387_0_0_9"/>
<dbReference type="OMA" id="MIEIGSW"/>
<dbReference type="OrthoDB" id="9803760at2"/>
<dbReference type="UniPathway" id="UPA00219"/>
<dbReference type="EvolutionaryTrace" id="Q81K13"/>
<dbReference type="Proteomes" id="UP000000427">
    <property type="component" value="Chromosome"/>
</dbReference>
<dbReference type="Proteomes" id="UP000000594">
    <property type="component" value="Chromosome"/>
</dbReference>
<dbReference type="GO" id="GO:0005737">
    <property type="term" value="C:cytoplasm"/>
    <property type="evidence" value="ECO:0007669"/>
    <property type="project" value="UniProtKB-SubCell"/>
</dbReference>
<dbReference type="GO" id="GO:0008760">
    <property type="term" value="F:UDP-N-acetylglucosamine 1-carboxyvinyltransferase activity"/>
    <property type="evidence" value="ECO:0007669"/>
    <property type="project" value="UniProtKB-UniRule"/>
</dbReference>
<dbReference type="GO" id="GO:0051301">
    <property type="term" value="P:cell division"/>
    <property type="evidence" value="ECO:0007669"/>
    <property type="project" value="UniProtKB-KW"/>
</dbReference>
<dbReference type="GO" id="GO:0071555">
    <property type="term" value="P:cell wall organization"/>
    <property type="evidence" value="ECO:0007669"/>
    <property type="project" value="UniProtKB-KW"/>
</dbReference>
<dbReference type="GO" id="GO:0009252">
    <property type="term" value="P:peptidoglycan biosynthetic process"/>
    <property type="evidence" value="ECO:0007669"/>
    <property type="project" value="UniProtKB-UniRule"/>
</dbReference>
<dbReference type="GO" id="GO:0008360">
    <property type="term" value="P:regulation of cell shape"/>
    <property type="evidence" value="ECO:0007669"/>
    <property type="project" value="UniProtKB-KW"/>
</dbReference>
<dbReference type="GO" id="GO:0019277">
    <property type="term" value="P:UDP-N-acetylgalactosamine biosynthetic process"/>
    <property type="evidence" value="ECO:0007669"/>
    <property type="project" value="InterPro"/>
</dbReference>
<dbReference type="CDD" id="cd01555">
    <property type="entry name" value="UdpNAET"/>
    <property type="match status" value="1"/>
</dbReference>
<dbReference type="FunFam" id="3.65.10.10:FF:000001">
    <property type="entry name" value="UDP-N-acetylglucosamine 1-carboxyvinyltransferase"/>
    <property type="match status" value="1"/>
</dbReference>
<dbReference type="Gene3D" id="3.65.10.10">
    <property type="entry name" value="Enolpyruvate transferase domain"/>
    <property type="match status" value="2"/>
</dbReference>
<dbReference type="HAMAP" id="MF_00111">
    <property type="entry name" value="MurA"/>
    <property type="match status" value="1"/>
</dbReference>
<dbReference type="InterPro" id="IPR001986">
    <property type="entry name" value="Enolpyruvate_Tfrase_dom"/>
</dbReference>
<dbReference type="InterPro" id="IPR036968">
    <property type="entry name" value="Enolpyruvate_Tfrase_sf"/>
</dbReference>
<dbReference type="InterPro" id="IPR050068">
    <property type="entry name" value="MurA_subfamily"/>
</dbReference>
<dbReference type="InterPro" id="IPR013792">
    <property type="entry name" value="RNA3'P_cycl/enolpyr_Trfase_a/b"/>
</dbReference>
<dbReference type="InterPro" id="IPR005750">
    <property type="entry name" value="UDP_GlcNAc_COvinyl_MurA"/>
</dbReference>
<dbReference type="NCBIfam" id="TIGR01072">
    <property type="entry name" value="murA"/>
    <property type="match status" value="1"/>
</dbReference>
<dbReference type="NCBIfam" id="NF006873">
    <property type="entry name" value="PRK09369.1"/>
    <property type="match status" value="1"/>
</dbReference>
<dbReference type="NCBIfam" id="NF009470">
    <property type="entry name" value="PRK12830.1"/>
    <property type="match status" value="1"/>
</dbReference>
<dbReference type="PANTHER" id="PTHR43783">
    <property type="entry name" value="UDP-N-ACETYLGLUCOSAMINE 1-CARBOXYVINYLTRANSFERASE"/>
    <property type="match status" value="1"/>
</dbReference>
<dbReference type="PANTHER" id="PTHR43783:SF1">
    <property type="entry name" value="UDP-N-ACETYLGLUCOSAMINE 1-CARBOXYVINYLTRANSFERASE"/>
    <property type="match status" value="1"/>
</dbReference>
<dbReference type="Pfam" id="PF00275">
    <property type="entry name" value="EPSP_synthase"/>
    <property type="match status" value="1"/>
</dbReference>
<dbReference type="SUPFAM" id="SSF55205">
    <property type="entry name" value="EPT/RTPC-like"/>
    <property type="match status" value="1"/>
</dbReference>
<keyword id="KW-0002">3D-structure</keyword>
<keyword id="KW-0131">Cell cycle</keyword>
<keyword id="KW-0132">Cell division</keyword>
<keyword id="KW-0133">Cell shape</keyword>
<keyword id="KW-0961">Cell wall biogenesis/degradation</keyword>
<keyword id="KW-0963">Cytoplasm</keyword>
<keyword id="KW-0573">Peptidoglycan synthesis</keyword>
<keyword id="KW-0670">Pyruvate</keyword>
<keyword id="KW-1185">Reference proteome</keyword>
<keyword id="KW-0808">Transferase</keyword>
<reference key="1">
    <citation type="journal article" date="2003" name="Nature">
        <title>The genome sequence of Bacillus anthracis Ames and comparison to closely related bacteria.</title>
        <authorList>
            <person name="Read T.D."/>
            <person name="Peterson S.N."/>
            <person name="Tourasse N.J."/>
            <person name="Baillie L.W."/>
            <person name="Paulsen I.T."/>
            <person name="Nelson K.E."/>
            <person name="Tettelin H."/>
            <person name="Fouts D.E."/>
            <person name="Eisen J.A."/>
            <person name="Gill S.R."/>
            <person name="Holtzapple E.K."/>
            <person name="Okstad O.A."/>
            <person name="Helgason E."/>
            <person name="Rilstone J."/>
            <person name="Wu M."/>
            <person name="Kolonay J.F."/>
            <person name="Beanan M.J."/>
            <person name="Dodson R.J."/>
            <person name="Brinkac L.M."/>
            <person name="Gwinn M.L."/>
            <person name="DeBoy R.T."/>
            <person name="Madpu R."/>
            <person name="Daugherty S.C."/>
            <person name="Durkin A.S."/>
            <person name="Haft D.H."/>
            <person name="Nelson W.C."/>
            <person name="Peterson J.D."/>
            <person name="Pop M."/>
            <person name="Khouri H.M."/>
            <person name="Radune D."/>
            <person name="Benton J.L."/>
            <person name="Mahamoud Y."/>
            <person name="Jiang L."/>
            <person name="Hance I.R."/>
            <person name="Weidman J.F."/>
            <person name="Berry K.J."/>
            <person name="Plaut R.D."/>
            <person name="Wolf A.M."/>
            <person name="Watkins K.L."/>
            <person name="Nierman W.C."/>
            <person name="Hazen A."/>
            <person name="Cline R.T."/>
            <person name="Redmond C."/>
            <person name="Thwaite J.E."/>
            <person name="White O."/>
            <person name="Salzberg S.L."/>
            <person name="Thomason B."/>
            <person name="Friedlander A.M."/>
            <person name="Koehler T.M."/>
            <person name="Hanna P.C."/>
            <person name="Kolstoe A.-B."/>
            <person name="Fraser C.M."/>
        </authorList>
    </citation>
    <scope>NUCLEOTIDE SEQUENCE [LARGE SCALE GENOMIC DNA]</scope>
    <source>
        <strain>Ames / isolate Porton</strain>
    </source>
</reference>
<reference key="2">
    <citation type="journal article" date="2009" name="J. Bacteriol.">
        <title>The complete genome sequence of Bacillus anthracis Ames 'Ancestor'.</title>
        <authorList>
            <person name="Ravel J."/>
            <person name="Jiang L."/>
            <person name="Stanley S.T."/>
            <person name="Wilson M.R."/>
            <person name="Decker R.S."/>
            <person name="Read T.D."/>
            <person name="Worsham P."/>
            <person name="Keim P.S."/>
            <person name="Salzberg S.L."/>
            <person name="Fraser-Liggett C.M."/>
            <person name="Rasko D.A."/>
        </authorList>
    </citation>
    <scope>NUCLEOTIDE SEQUENCE [LARGE SCALE GENOMIC DNA]</scope>
    <source>
        <strain>Ames ancestor</strain>
    </source>
</reference>
<reference key="3">
    <citation type="submission" date="2004-01" db="EMBL/GenBank/DDBJ databases">
        <title>Complete genome sequence of Bacillus anthracis Sterne.</title>
        <authorList>
            <person name="Brettin T.S."/>
            <person name="Bruce D."/>
            <person name="Challacombe J.F."/>
            <person name="Gilna P."/>
            <person name="Han C."/>
            <person name="Hill K."/>
            <person name="Hitchcock P."/>
            <person name="Jackson P."/>
            <person name="Keim P."/>
            <person name="Longmire J."/>
            <person name="Lucas S."/>
            <person name="Okinaka R."/>
            <person name="Richardson P."/>
            <person name="Rubin E."/>
            <person name="Tice H."/>
        </authorList>
    </citation>
    <scope>NUCLEOTIDE SEQUENCE [LARGE SCALE GENOMIC DNA]</scope>
    <source>
        <strain>Sterne</strain>
    </source>
</reference>
<reference evidence="2" key="4">
    <citation type="submission" date="2011-06" db="PDB data bank">
        <title>2.6 Angstrom crystal structure of UDP-N-acetylglucosamine 1-carboxyvinyltransferase 1 (MurA1) from Bacillus anthracis.</title>
        <authorList>
            <consortium name="Center for structural genomics of infectious diseases (CSGID)"/>
        </authorList>
    </citation>
    <scope>X-RAY CRYSTALLOGRAPHY (2.60 ANGSTROMS)</scope>
</reference>
<name>MURA1_BACAN</name>
<feature type="chain" id="PRO_0000231153" description="UDP-N-acetylglucosamine 1-carboxyvinyltransferase 1">
    <location>
        <begin position="1"/>
        <end position="434"/>
    </location>
</feature>
<feature type="active site" description="Proton donor" evidence="1">
    <location>
        <position position="117"/>
    </location>
</feature>
<feature type="binding site" evidence="1">
    <location>
        <begin position="22"/>
        <end position="23"/>
    </location>
    <ligand>
        <name>phosphoenolpyruvate</name>
        <dbReference type="ChEBI" id="CHEBI:58702"/>
    </ligand>
</feature>
<feature type="binding site" evidence="1">
    <location>
        <position position="93"/>
    </location>
    <ligand>
        <name>UDP-N-acetyl-alpha-D-glucosamine</name>
        <dbReference type="ChEBI" id="CHEBI:57705"/>
    </ligand>
</feature>
<feature type="binding site" evidence="1">
    <location>
        <begin position="122"/>
        <end position="126"/>
    </location>
    <ligand>
        <name>UDP-N-acetyl-alpha-D-glucosamine</name>
        <dbReference type="ChEBI" id="CHEBI:57705"/>
    </ligand>
</feature>
<feature type="binding site" evidence="1">
    <location>
        <position position="306"/>
    </location>
    <ligand>
        <name>UDP-N-acetyl-alpha-D-glucosamine</name>
        <dbReference type="ChEBI" id="CHEBI:57705"/>
    </ligand>
</feature>
<feature type="binding site" evidence="1">
    <location>
        <position position="328"/>
    </location>
    <ligand>
        <name>UDP-N-acetyl-alpha-D-glucosamine</name>
        <dbReference type="ChEBI" id="CHEBI:57705"/>
    </ligand>
</feature>
<feature type="modified residue" description="2-(S-cysteinyl)pyruvic acid O-phosphothioketal" evidence="1">
    <location>
        <position position="117"/>
    </location>
</feature>
<feature type="strand" evidence="3">
    <location>
        <begin position="3"/>
        <end position="6"/>
    </location>
</feature>
<feature type="strand" evidence="3">
    <location>
        <begin position="13"/>
        <end position="16"/>
    </location>
</feature>
<feature type="helix" evidence="3">
    <location>
        <begin position="22"/>
        <end position="31"/>
    </location>
</feature>
<feature type="helix" evidence="3">
    <location>
        <begin position="32"/>
        <end position="34"/>
    </location>
</feature>
<feature type="strand" evidence="3">
    <location>
        <begin position="37"/>
        <end position="44"/>
    </location>
</feature>
<feature type="helix" evidence="3">
    <location>
        <begin position="49"/>
        <end position="60"/>
    </location>
</feature>
<feature type="strand" evidence="3">
    <location>
        <begin position="64"/>
        <end position="68"/>
    </location>
</feature>
<feature type="strand" evidence="3">
    <location>
        <begin position="71"/>
        <end position="75"/>
    </location>
</feature>
<feature type="helix" evidence="3">
    <location>
        <begin position="86"/>
        <end position="91"/>
    </location>
</feature>
<feature type="helix" evidence="3">
    <location>
        <begin position="93"/>
        <end position="98"/>
    </location>
</feature>
<feature type="helix" evidence="3">
    <location>
        <begin position="99"/>
        <end position="106"/>
    </location>
</feature>
<feature type="strand" evidence="3">
    <location>
        <begin position="107"/>
        <end position="112"/>
    </location>
</feature>
<feature type="helix" evidence="3">
    <location>
        <begin position="125"/>
        <end position="133"/>
    </location>
</feature>
<feature type="strand" evidence="3">
    <location>
        <begin position="136"/>
        <end position="141"/>
    </location>
</feature>
<feature type="strand" evidence="3">
    <location>
        <begin position="144"/>
        <end position="152"/>
    </location>
</feature>
<feature type="strand" evidence="3">
    <location>
        <begin position="157"/>
        <end position="159"/>
    </location>
</feature>
<feature type="helix" evidence="3">
    <location>
        <begin position="165"/>
        <end position="175"/>
    </location>
</feature>
<feature type="strand" evidence="3">
    <location>
        <begin position="178"/>
        <end position="186"/>
    </location>
</feature>
<feature type="helix" evidence="3">
    <location>
        <begin position="191"/>
        <end position="202"/>
    </location>
</feature>
<feature type="strand" evidence="3">
    <location>
        <begin position="212"/>
        <end position="218"/>
    </location>
</feature>
<feature type="strand" evidence="3">
    <location>
        <begin position="227"/>
        <end position="229"/>
    </location>
</feature>
<feature type="helix" evidence="3">
    <location>
        <begin position="234"/>
        <end position="247"/>
    </location>
</feature>
<feature type="strand" evidence="3">
    <location>
        <begin position="250"/>
        <end position="253"/>
    </location>
</feature>
<feature type="helix" evidence="3">
    <location>
        <begin position="258"/>
        <end position="260"/>
    </location>
</feature>
<feature type="helix" evidence="3">
    <location>
        <begin position="262"/>
        <end position="270"/>
    </location>
</feature>
<feature type="strand" evidence="3">
    <location>
        <begin position="274"/>
        <end position="276"/>
    </location>
</feature>
<feature type="strand" evidence="3">
    <location>
        <begin position="279"/>
        <end position="285"/>
    </location>
</feature>
<feature type="strand" evidence="3">
    <location>
        <begin position="288"/>
        <end position="291"/>
    </location>
</feature>
<feature type="strand" evidence="3">
    <location>
        <begin position="295"/>
        <end position="297"/>
    </location>
</feature>
<feature type="helix" evidence="3">
    <location>
        <begin position="305"/>
        <end position="307"/>
    </location>
</feature>
<feature type="helix" evidence="3">
    <location>
        <begin position="308"/>
        <end position="315"/>
    </location>
</feature>
<feature type="strand" evidence="3">
    <location>
        <begin position="318"/>
        <end position="329"/>
    </location>
</feature>
<feature type="helix" evidence="3">
    <location>
        <begin position="336"/>
        <end position="341"/>
    </location>
</feature>
<feature type="strand" evidence="3">
    <location>
        <begin position="346"/>
        <end position="349"/>
    </location>
</feature>
<feature type="strand" evidence="3">
    <location>
        <begin position="352"/>
        <end position="358"/>
    </location>
</feature>
<feature type="strand" evidence="3">
    <location>
        <begin position="365"/>
        <end position="367"/>
    </location>
</feature>
<feature type="helix" evidence="3">
    <location>
        <begin position="371"/>
        <end position="381"/>
    </location>
</feature>
<feature type="strand" evidence="3">
    <location>
        <begin position="384"/>
        <end position="386"/>
    </location>
</feature>
<feature type="strand" evidence="3">
    <location>
        <begin position="388"/>
        <end position="391"/>
    </location>
</feature>
<feature type="turn" evidence="3">
    <location>
        <begin position="393"/>
        <end position="395"/>
    </location>
</feature>
<feature type="helix" evidence="3">
    <location>
        <begin position="396"/>
        <end position="399"/>
    </location>
</feature>
<feature type="helix" evidence="3">
    <location>
        <begin position="403"/>
        <end position="409"/>
    </location>
</feature>
<feature type="strand" evidence="3">
    <location>
        <begin position="414"/>
        <end position="417"/>
    </location>
</feature>
<sequence length="434" mass="46773">MEKIIVRGGKRLNGTVRVEGAKNAVLPIIAAALLASDGKNVLSEVPVLSDVYTINEVLRHLNAEVVFENNQVTIDASKELNIEAPFEYVRKMRASVQVMGPLLARNGRARIALPGGCAIGSRPIDQHLKGFEAMGAKVQVGNGFVEAYVEGELKGAKIYLDFPSVGATENIMSAATLAKGTTILENAAKEPEIVDLANFLNAMGAKVRGAGTGTIRIEGVDKLYGANHSIIPDRIEAGTFMVAAAITGGDILIENAVPEHLRSITAKMEEMGVKIIEENEGVRVIGPDKLKAVDIKTMPHPGFPTDMQSQMMALLLQADGTSMITETVFENRFMHVEEFRRMNADIKIEGRSVIMNGPNSLQGAEVGATDLRAAAALILAGLVSEGYTRVTELKHLDRGYVDFHKKLAALGATIERVNEKVEEVKEQEVSDLHA</sequence>
<proteinExistence type="evidence at protein level"/>
<evidence type="ECO:0000255" key="1">
    <source>
        <dbReference type="HAMAP-Rule" id="MF_00111"/>
    </source>
</evidence>
<evidence type="ECO:0007744" key="2">
    <source>
        <dbReference type="PDB" id="3SG1"/>
    </source>
</evidence>
<evidence type="ECO:0007829" key="3">
    <source>
        <dbReference type="PDB" id="3SG1"/>
    </source>
</evidence>
<comment type="function">
    <text evidence="1">Cell wall formation. Adds enolpyruvyl to UDP-N-acetylglucosamine.</text>
</comment>
<comment type="catalytic activity">
    <reaction evidence="1">
        <text>phosphoenolpyruvate + UDP-N-acetyl-alpha-D-glucosamine = UDP-N-acetyl-3-O-(1-carboxyvinyl)-alpha-D-glucosamine + phosphate</text>
        <dbReference type="Rhea" id="RHEA:18681"/>
        <dbReference type="ChEBI" id="CHEBI:43474"/>
        <dbReference type="ChEBI" id="CHEBI:57705"/>
        <dbReference type="ChEBI" id="CHEBI:58702"/>
        <dbReference type="ChEBI" id="CHEBI:68483"/>
        <dbReference type="EC" id="2.5.1.7"/>
    </reaction>
</comment>
<comment type="pathway">
    <text evidence="1">Cell wall biogenesis; peptidoglycan biosynthesis.</text>
</comment>
<comment type="subcellular location">
    <subcellularLocation>
        <location evidence="1">Cytoplasm</location>
    </subcellularLocation>
</comment>
<comment type="similarity">
    <text evidence="1">Belongs to the EPSP synthase family. MurA subfamily.</text>
</comment>
<protein>
    <recommendedName>
        <fullName evidence="1">UDP-N-acetylglucosamine 1-carboxyvinyltransferase 1</fullName>
        <ecNumber evidence="1">2.5.1.7</ecNumber>
    </recommendedName>
    <alternativeName>
        <fullName evidence="1">Enoylpyruvate transferase 1</fullName>
    </alternativeName>
    <alternativeName>
        <fullName evidence="1">UDP-N-acetylglucosamine enolpyruvyl transferase 1</fullName>
        <shortName evidence="1">EPT 1</shortName>
    </alternativeName>
</protein>